<feature type="chain" id="PRO_1000131940" description="Leucyl/phenylalanyl-tRNA--protein transferase">
    <location>
        <begin position="1"/>
        <end position="248"/>
    </location>
</feature>
<comment type="function">
    <text evidence="1">Functions in the N-end rule pathway of protein degradation where it conjugates Leu, Phe and, less efficiently, Met from aminoacyl-tRNAs to the N-termini of proteins containing an N-terminal arginine or lysine.</text>
</comment>
<comment type="catalytic activity">
    <reaction evidence="1">
        <text>N-terminal L-lysyl-[protein] + L-leucyl-tRNA(Leu) = N-terminal L-leucyl-L-lysyl-[protein] + tRNA(Leu) + H(+)</text>
        <dbReference type="Rhea" id="RHEA:12340"/>
        <dbReference type="Rhea" id="RHEA-COMP:9613"/>
        <dbReference type="Rhea" id="RHEA-COMP:9622"/>
        <dbReference type="Rhea" id="RHEA-COMP:12670"/>
        <dbReference type="Rhea" id="RHEA-COMP:12671"/>
        <dbReference type="ChEBI" id="CHEBI:15378"/>
        <dbReference type="ChEBI" id="CHEBI:65249"/>
        <dbReference type="ChEBI" id="CHEBI:78442"/>
        <dbReference type="ChEBI" id="CHEBI:78494"/>
        <dbReference type="ChEBI" id="CHEBI:133043"/>
        <dbReference type="EC" id="2.3.2.6"/>
    </reaction>
</comment>
<comment type="catalytic activity">
    <reaction evidence="1">
        <text>N-terminal L-arginyl-[protein] + L-leucyl-tRNA(Leu) = N-terminal L-leucyl-L-arginyl-[protein] + tRNA(Leu) + H(+)</text>
        <dbReference type="Rhea" id="RHEA:50416"/>
        <dbReference type="Rhea" id="RHEA-COMP:9613"/>
        <dbReference type="Rhea" id="RHEA-COMP:9622"/>
        <dbReference type="Rhea" id="RHEA-COMP:12672"/>
        <dbReference type="Rhea" id="RHEA-COMP:12673"/>
        <dbReference type="ChEBI" id="CHEBI:15378"/>
        <dbReference type="ChEBI" id="CHEBI:64719"/>
        <dbReference type="ChEBI" id="CHEBI:78442"/>
        <dbReference type="ChEBI" id="CHEBI:78494"/>
        <dbReference type="ChEBI" id="CHEBI:133044"/>
        <dbReference type="EC" id="2.3.2.6"/>
    </reaction>
</comment>
<comment type="catalytic activity">
    <reaction evidence="1">
        <text>L-phenylalanyl-tRNA(Phe) + an N-terminal L-alpha-aminoacyl-[protein] = an N-terminal L-phenylalanyl-L-alpha-aminoacyl-[protein] + tRNA(Phe)</text>
        <dbReference type="Rhea" id="RHEA:43632"/>
        <dbReference type="Rhea" id="RHEA-COMP:9668"/>
        <dbReference type="Rhea" id="RHEA-COMP:9699"/>
        <dbReference type="Rhea" id="RHEA-COMP:10636"/>
        <dbReference type="Rhea" id="RHEA-COMP:10637"/>
        <dbReference type="ChEBI" id="CHEBI:78442"/>
        <dbReference type="ChEBI" id="CHEBI:78531"/>
        <dbReference type="ChEBI" id="CHEBI:78597"/>
        <dbReference type="ChEBI" id="CHEBI:83561"/>
        <dbReference type="EC" id="2.3.2.6"/>
    </reaction>
</comment>
<comment type="subcellular location">
    <subcellularLocation>
        <location evidence="1">Cytoplasm</location>
    </subcellularLocation>
</comment>
<comment type="similarity">
    <text evidence="1">Belongs to the L/F-transferase family.</text>
</comment>
<sequence length="248" mass="27650">MIAWLDPHDPFPPVDRALGPESEAPGLLAASAELSPQRLLIAYRQGIFPWYAQGQPVLWWSTDPRMVLRPEDFRVSTTFRKTLRRVLDDPAWEIRIDHAFRETMVACATTARPGQHGTWITEDVIQAYTALHRRGYAHSVETWHAGQRVGGLYGVALGRMFYGESMFAHRTDASKIALAALCAFLGGQGVAMIDCQQETEHLASLGGAPVPRAAFLAHVREAASAPAIVPWHFDKSVLRRWTVRNEQA</sequence>
<name>LFTR_RALPJ</name>
<organism>
    <name type="scientific">Ralstonia pickettii (strain 12J)</name>
    <dbReference type="NCBI Taxonomy" id="402626"/>
    <lineage>
        <taxon>Bacteria</taxon>
        <taxon>Pseudomonadati</taxon>
        <taxon>Pseudomonadota</taxon>
        <taxon>Betaproteobacteria</taxon>
        <taxon>Burkholderiales</taxon>
        <taxon>Burkholderiaceae</taxon>
        <taxon>Ralstonia</taxon>
    </lineage>
</organism>
<evidence type="ECO:0000255" key="1">
    <source>
        <dbReference type="HAMAP-Rule" id="MF_00688"/>
    </source>
</evidence>
<reference key="1">
    <citation type="submission" date="2008-05" db="EMBL/GenBank/DDBJ databases">
        <title>Complete sequence of chromosome 1 of Ralstonia pickettii 12J.</title>
        <authorList>
            <person name="Lucas S."/>
            <person name="Copeland A."/>
            <person name="Lapidus A."/>
            <person name="Glavina del Rio T."/>
            <person name="Dalin E."/>
            <person name="Tice H."/>
            <person name="Bruce D."/>
            <person name="Goodwin L."/>
            <person name="Pitluck S."/>
            <person name="Meincke L."/>
            <person name="Brettin T."/>
            <person name="Detter J.C."/>
            <person name="Han C."/>
            <person name="Kuske C.R."/>
            <person name="Schmutz J."/>
            <person name="Larimer F."/>
            <person name="Land M."/>
            <person name="Hauser L."/>
            <person name="Kyrpides N."/>
            <person name="Mikhailova N."/>
            <person name="Marsh T."/>
            <person name="Richardson P."/>
        </authorList>
    </citation>
    <scope>NUCLEOTIDE SEQUENCE [LARGE SCALE GENOMIC DNA]</scope>
    <source>
        <strain>12J</strain>
    </source>
</reference>
<accession>B2UFW4</accession>
<gene>
    <name evidence="1" type="primary">aat</name>
    <name type="ordered locus">Rpic_1930</name>
</gene>
<protein>
    <recommendedName>
        <fullName evidence="1">Leucyl/phenylalanyl-tRNA--protein transferase</fullName>
        <ecNumber evidence="1">2.3.2.6</ecNumber>
    </recommendedName>
    <alternativeName>
        <fullName evidence="1">L/F-transferase</fullName>
    </alternativeName>
    <alternativeName>
        <fullName evidence="1">Leucyltransferase</fullName>
    </alternativeName>
    <alternativeName>
        <fullName evidence="1">Phenyalanyltransferase</fullName>
    </alternativeName>
</protein>
<dbReference type="EC" id="2.3.2.6" evidence="1"/>
<dbReference type="EMBL" id="CP001068">
    <property type="protein sequence ID" value="ACD27065.1"/>
    <property type="molecule type" value="Genomic_DNA"/>
</dbReference>
<dbReference type="SMR" id="B2UFW4"/>
<dbReference type="STRING" id="402626.Rpic_1930"/>
<dbReference type="KEGG" id="rpi:Rpic_1930"/>
<dbReference type="eggNOG" id="COG2360">
    <property type="taxonomic scope" value="Bacteria"/>
</dbReference>
<dbReference type="HOGENOM" id="CLU_075045_0_0_4"/>
<dbReference type="GO" id="GO:0005737">
    <property type="term" value="C:cytoplasm"/>
    <property type="evidence" value="ECO:0007669"/>
    <property type="project" value="UniProtKB-SubCell"/>
</dbReference>
<dbReference type="GO" id="GO:0008914">
    <property type="term" value="F:leucyl-tRNA--protein transferase activity"/>
    <property type="evidence" value="ECO:0007669"/>
    <property type="project" value="UniProtKB-UniRule"/>
</dbReference>
<dbReference type="GO" id="GO:0030163">
    <property type="term" value="P:protein catabolic process"/>
    <property type="evidence" value="ECO:0007669"/>
    <property type="project" value="UniProtKB-UniRule"/>
</dbReference>
<dbReference type="Gene3D" id="3.40.630.70">
    <property type="entry name" value="Leucyl/phenylalanyl-tRNA-protein transferase, C-terminal domain"/>
    <property type="match status" value="1"/>
</dbReference>
<dbReference type="Gene3D" id="3.30.70.3550">
    <property type="entry name" value="Leucyl/phenylalanyl-tRNA-protein transferase, N-terminal domain"/>
    <property type="match status" value="1"/>
</dbReference>
<dbReference type="HAMAP" id="MF_00688">
    <property type="entry name" value="Leu_Phe_trans"/>
    <property type="match status" value="1"/>
</dbReference>
<dbReference type="InterPro" id="IPR016181">
    <property type="entry name" value="Acyl_CoA_acyltransferase"/>
</dbReference>
<dbReference type="InterPro" id="IPR004616">
    <property type="entry name" value="Leu/Phe-tRNA_Trfase"/>
</dbReference>
<dbReference type="InterPro" id="IPR042203">
    <property type="entry name" value="Leu/Phe-tRNA_Trfase_C"/>
</dbReference>
<dbReference type="InterPro" id="IPR042221">
    <property type="entry name" value="Leu/Phe-tRNA_Trfase_N"/>
</dbReference>
<dbReference type="NCBIfam" id="TIGR00667">
    <property type="entry name" value="aat"/>
    <property type="match status" value="1"/>
</dbReference>
<dbReference type="PANTHER" id="PTHR30098">
    <property type="entry name" value="LEUCYL/PHENYLALANYL-TRNA--PROTEIN TRANSFERASE"/>
    <property type="match status" value="1"/>
</dbReference>
<dbReference type="PANTHER" id="PTHR30098:SF2">
    <property type="entry name" value="LEUCYL_PHENYLALANYL-TRNA--PROTEIN TRANSFERASE"/>
    <property type="match status" value="1"/>
</dbReference>
<dbReference type="Pfam" id="PF03588">
    <property type="entry name" value="Leu_Phe_trans"/>
    <property type="match status" value="1"/>
</dbReference>
<dbReference type="SUPFAM" id="SSF55729">
    <property type="entry name" value="Acyl-CoA N-acyltransferases (Nat)"/>
    <property type="match status" value="1"/>
</dbReference>
<keyword id="KW-0012">Acyltransferase</keyword>
<keyword id="KW-0963">Cytoplasm</keyword>
<keyword id="KW-0808">Transferase</keyword>
<proteinExistence type="inferred from homology"/>